<dbReference type="EMBL" id="DQ826420">
    <property type="protein sequence ID" value="ABH11659.1"/>
    <property type="molecule type" value="Genomic_DNA"/>
</dbReference>
<dbReference type="SMR" id="Q0MXD1"/>
<dbReference type="OMA" id="GQELRWQ"/>
<dbReference type="GO" id="GO:0000775">
    <property type="term" value="C:chromosome, centromeric region"/>
    <property type="evidence" value="ECO:0007669"/>
    <property type="project" value="UniProtKB-SubCell"/>
</dbReference>
<dbReference type="GO" id="GO:0000786">
    <property type="term" value="C:nucleosome"/>
    <property type="evidence" value="ECO:0007669"/>
    <property type="project" value="UniProtKB-KW"/>
</dbReference>
<dbReference type="GO" id="GO:0005634">
    <property type="term" value="C:nucleus"/>
    <property type="evidence" value="ECO:0007669"/>
    <property type="project" value="UniProtKB-SubCell"/>
</dbReference>
<dbReference type="GO" id="GO:0003677">
    <property type="term" value="F:DNA binding"/>
    <property type="evidence" value="ECO:0007669"/>
    <property type="project" value="UniProtKB-KW"/>
</dbReference>
<dbReference type="GO" id="GO:0046982">
    <property type="term" value="F:protein heterodimerization activity"/>
    <property type="evidence" value="ECO:0007669"/>
    <property type="project" value="InterPro"/>
</dbReference>
<dbReference type="GO" id="GO:0030527">
    <property type="term" value="F:structural constituent of chromatin"/>
    <property type="evidence" value="ECO:0007669"/>
    <property type="project" value="InterPro"/>
</dbReference>
<dbReference type="CDD" id="cd22911">
    <property type="entry name" value="HFD_H3"/>
    <property type="match status" value="1"/>
</dbReference>
<dbReference type="FunFam" id="1.10.20.10:FF:000087">
    <property type="entry name" value="Probable histone 3"/>
    <property type="match status" value="1"/>
</dbReference>
<dbReference type="Gene3D" id="1.10.20.10">
    <property type="entry name" value="Histone, subunit A"/>
    <property type="match status" value="1"/>
</dbReference>
<dbReference type="InterPro" id="IPR009072">
    <property type="entry name" value="Histone-fold"/>
</dbReference>
<dbReference type="InterPro" id="IPR007125">
    <property type="entry name" value="Histone_H2A/H2B/H3"/>
</dbReference>
<dbReference type="InterPro" id="IPR000164">
    <property type="entry name" value="Histone_H3/CENP-A"/>
</dbReference>
<dbReference type="PANTHER" id="PTHR45810:SF1">
    <property type="entry name" value="HISTONE H3-LIKE CENTROMERIC PROTEIN A"/>
    <property type="match status" value="1"/>
</dbReference>
<dbReference type="PANTHER" id="PTHR45810">
    <property type="entry name" value="HISTONE H3.2"/>
    <property type="match status" value="1"/>
</dbReference>
<dbReference type="Pfam" id="PF00125">
    <property type="entry name" value="Histone"/>
    <property type="match status" value="1"/>
</dbReference>
<dbReference type="PRINTS" id="PR00622">
    <property type="entry name" value="HISTONEH3"/>
</dbReference>
<dbReference type="SMART" id="SM00428">
    <property type="entry name" value="H3"/>
    <property type="match status" value="1"/>
</dbReference>
<dbReference type="SUPFAM" id="SSF47113">
    <property type="entry name" value="Histone-fold"/>
    <property type="match status" value="1"/>
</dbReference>
<dbReference type="PROSITE" id="PS00959">
    <property type="entry name" value="HISTONE_H3_2"/>
    <property type="match status" value="1"/>
</dbReference>
<accession>Q0MXD1</accession>
<keyword id="KW-0137">Centromere</keyword>
<keyword id="KW-0158">Chromosome</keyword>
<keyword id="KW-0238">DNA-binding</keyword>
<keyword id="KW-0544">Nucleosome core</keyword>
<keyword id="KW-0539">Nucleus</keyword>
<keyword id="KW-0832">Ubl conjugation</keyword>
<evidence type="ECO:0000250" key="1">
    <source>
        <dbReference type="UniProtKB" id="P36012"/>
    </source>
</evidence>
<evidence type="ECO:0000256" key="2">
    <source>
        <dbReference type="SAM" id="MobiDB-lite"/>
    </source>
</evidence>
<evidence type="ECO:0000305" key="3"/>
<gene>
    <name type="primary">CSE4</name>
</gene>
<comment type="function">
    <text evidence="1">Histone H3-like nucleosomal protein that is specifically found in centromeric nucleosomes. Replaces conventional H3 in the nucleosome core of centromeric chromatin that serves as an assembly site for the inner kinetochore. Required for recruitment and assembly of kinetochore proteins, mitotic progression and chromosome segregation. May serve as an epigenetic mark that propagates centromere identity through replication and cell division (By similarity).</text>
</comment>
<comment type="subunit">
    <text evidence="1">Component of centromeric nucleosomes, where DNA is wrapped around a histone octamer core. The octamer contains two molecules each of H2A, H2B, CSE4/CENPA and H4 assembled in one CSE4-H4 heterotetramer and two H2A-H2B heterodimers. Interacts with the inner kinetochore.</text>
</comment>
<comment type="subcellular location">
    <subcellularLocation>
        <location evidence="1">Nucleus</location>
    </subcellularLocation>
    <subcellularLocation>
        <location evidence="1">Chromosome</location>
        <location evidence="1">Centromere</location>
    </subcellularLocation>
</comment>
<comment type="PTM">
    <text evidence="1">Ubiquitinated. Is degraded through ubiquitin-mediated proteolysis when not protected by its association to the kinetochore.</text>
</comment>
<comment type="similarity">
    <text evidence="3">Belongs to the histone H3 family.</text>
</comment>
<sequence length="158" mass="17938">MARISTSSNRPVPTSSALRRQRERDDGGRSTRAPGHNTGLYGNQPGDPPTIRSTNTTVKRRYRPGTKALREIRRYQRSSELLIRKLPFARLVKEVAENYIGADYGIRWQSNAVLALQEACEAFLVHLLEDTNLCAIHAKRVTIMQKDIQLARRIRGNI</sequence>
<name>CENPA_MILFA</name>
<protein>
    <recommendedName>
        <fullName>Histone H3-like centromeric protein CSE4</fullName>
    </recommendedName>
    <alternativeName>
        <fullName>CENP-A homolog</fullName>
    </alternativeName>
    <alternativeName>
        <fullName evidence="3">CENPA homolog</fullName>
    </alternativeName>
</protein>
<reference key="1">
    <citation type="submission" date="2006-06" db="EMBL/GenBank/DDBJ databases">
        <title>Phylogenetic analysis of fungal cenH3 proteins.</title>
        <authorList>
            <person name="Baker R.E."/>
            <person name="Rogers K."/>
        </authorList>
    </citation>
    <scope>NUCLEOTIDE SEQUENCE [GENOMIC DNA]</scope>
    <source>
        <strain>CBS 185 / DSM 3316 / JCM 10734 / NBRC 1163 / NRRL Y-7553</strain>
    </source>
</reference>
<feature type="chain" id="PRO_0000270601" description="Histone H3-like centromeric protein CSE4">
    <location>
        <begin position="1"/>
        <end position="158"/>
    </location>
</feature>
<feature type="region of interest" description="Disordered" evidence="2">
    <location>
        <begin position="1"/>
        <end position="59"/>
    </location>
</feature>
<feature type="region of interest" description="H3-like">
    <location>
        <begin position="54"/>
        <end position="157"/>
    </location>
</feature>
<feature type="compositionally biased region" description="Polar residues" evidence="2">
    <location>
        <begin position="1"/>
        <end position="18"/>
    </location>
</feature>
<feature type="compositionally biased region" description="Basic and acidic residues" evidence="2">
    <location>
        <begin position="20"/>
        <end position="29"/>
    </location>
</feature>
<organism>
    <name type="scientific">Millerozyma farinosa</name>
    <name type="common">Yeast</name>
    <name type="synonym">Pichia farinosa</name>
    <dbReference type="NCBI Taxonomy" id="4920"/>
    <lineage>
        <taxon>Eukaryota</taxon>
        <taxon>Fungi</taxon>
        <taxon>Dikarya</taxon>
        <taxon>Ascomycota</taxon>
        <taxon>Saccharomycotina</taxon>
        <taxon>Pichiomycetes</taxon>
        <taxon>Debaryomycetaceae</taxon>
        <taxon>Millerozyma</taxon>
    </lineage>
</organism>
<proteinExistence type="inferred from homology"/>